<accession>Q6A5S3</accession>
<comment type="function">
    <text evidence="1">Catalyzes the conversion of uracil and 5-phospho-alpha-D-ribose 1-diphosphate (PRPP) to UMP and diphosphate.</text>
</comment>
<comment type="catalytic activity">
    <reaction evidence="1">
        <text>UMP + diphosphate = 5-phospho-alpha-D-ribose 1-diphosphate + uracil</text>
        <dbReference type="Rhea" id="RHEA:13017"/>
        <dbReference type="ChEBI" id="CHEBI:17568"/>
        <dbReference type="ChEBI" id="CHEBI:33019"/>
        <dbReference type="ChEBI" id="CHEBI:57865"/>
        <dbReference type="ChEBI" id="CHEBI:58017"/>
        <dbReference type="EC" id="2.4.2.9"/>
    </reaction>
</comment>
<comment type="cofactor">
    <cofactor evidence="1">
        <name>Mg(2+)</name>
        <dbReference type="ChEBI" id="CHEBI:18420"/>
    </cofactor>
    <text evidence="1">Binds 1 Mg(2+) ion per subunit. The magnesium is bound as Mg-PRPP.</text>
</comment>
<comment type="activity regulation">
    <text evidence="1">Allosterically activated by GTP.</text>
</comment>
<comment type="pathway">
    <text evidence="1">Pyrimidine metabolism; UMP biosynthesis via salvage pathway; UMP from uracil: step 1/1.</text>
</comment>
<comment type="similarity">
    <text evidence="1">Belongs to the UPRTase family.</text>
</comment>
<evidence type="ECO:0000255" key="1">
    <source>
        <dbReference type="HAMAP-Rule" id="MF_01218"/>
    </source>
</evidence>
<name>UPP_CUTAK</name>
<feature type="chain" id="PRO_0000120868" description="Uracil phosphoribosyltransferase">
    <location>
        <begin position="1"/>
        <end position="213"/>
    </location>
</feature>
<feature type="binding site" evidence="1">
    <location>
        <position position="78"/>
    </location>
    <ligand>
        <name>5-phospho-alpha-D-ribose 1-diphosphate</name>
        <dbReference type="ChEBI" id="CHEBI:58017"/>
    </ligand>
</feature>
<feature type="binding site" evidence="1">
    <location>
        <position position="103"/>
    </location>
    <ligand>
        <name>5-phospho-alpha-D-ribose 1-diphosphate</name>
        <dbReference type="ChEBI" id="CHEBI:58017"/>
    </ligand>
</feature>
<feature type="binding site" evidence="1">
    <location>
        <begin position="130"/>
        <end position="138"/>
    </location>
    <ligand>
        <name>5-phospho-alpha-D-ribose 1-diphosphate</name>
        <dbReference type="ChEBI" id="CHEBI:58017"/>
    </ligand>
</feature>
<feature type="binding site" evidence="1">
    <location>
        <position position="197"/>
    </location>
    <ligand>
        <name>uracil</name>
        <dbReference type="ChEBI" id="CHEBI:17568"/>
    </ligand>
</feature>
<feature type="binding site" evidence="1">
    <location>
        <begin position="202"/>
        <end position="204"/>
    </location>
    <ligand>
        <name>uracil</name>
        <dbReference type="ChEBI" id="CHEBI:17568"/>
    </ligand>
</feature>
<feature type="binding site" evidence="1">
    <location>
        <position position="203"/>
    </location>
    <ligand>
        <name>5-phospho-alpha-D-ribose 1-diphosphate</name>
        <dbReference type="ChEBI" id="CHEBI:58017"/>
    </ligand>
</feature>
<reference key="1">
    <citation type="journal article" date="2004" name="Science">
        <title>The complete genome sequence of Propionibacterium acnes, a commensal of human skin.</title>
        <authorList>
            <person name="Brueggemann H."/>
            <person name="Henne A."/>
            <person name="Hoster F."/>
            <person name="Liesegang H."/>
            <person name="Wiezer A."/>
            <person name="Strittmatter A."/>
            <person name="Hujer S."/>
            <person name="Duerre P."/>
            <person name="Gottschalk G."/>
        </authorList>
    </citation>
    <scope>NUCLEOTIDE SEQUENCE [LARGE SCALE GENOMIC DNA]</scope>
    <source>
        <strain>DSM 16379 / KPA171202</strain>
    </source>
</reference>
<organism>
    <name type="scientific">Cutibacterium acnes (strain DSM 16379 / KPA171202)</name>
    <name type="common">Propionibacterium acnes</name>
    <dbReference type="NCBI Taxonomy" id="267747"/>
    <lineage>
        <taxon>Bacteria</taxon>
        <taxon>Bacillati</taxon>
        <taxon>Actinomycetota</taxon>
        <taxon>Actinomycetes</taxon>
        <taxon>Propionibacteriales</taxon>
        <taxon>Propionibacteriaceae</taxon>
        <taxon>Cutibacterium</taxon>
    </lineage>
</organism>
<sequence>MELNVMDHPLVSHKLTLLRSVDTPSPVFRQLVEELVTLMAYEGTREVRIEPTTVTTPLTATEGVALTRPKPLVVPILRAGLGMLEGMMRLIPSAEVGFVGMARDEETLQPMTYAERLPKDLSGRQCYVLDPMLATGGSLGGTVEFLVRRGADHITCLCILAAPEGIENFRKLVRDLDVPCHLIVAGLDDHLDEHGYIVPGLGDAGDRLYGLAE</sequence>
<dbReference type="EC" id="2.4.2.9" evidence="1"/>
<dbReference type="EMBL" id="AE017283">
    <property type="protein sequence ID" value="AAT83890.1"/>
    <property type="molecule type" value="Genomic_DNA"/>
</dbReference>
<dbReference type="SMR" id="Q6A5S3"/>
<dbReference type="EnsemblBacteria" id="AAT83890">
    <property type="protein sequence ID" value="AAT83890"/>
    <property type="gene ID" value="PPA2184"/>
</dbReference>
<dbReference type="KEGG" id="pac:PPA2184"/>
<dbReference type="eggNOG" id="COG0035">
    <property type="taxonomic scope" value="Bacteria"/>
</dbReference>
<dbReference type="HOGENOM" id="CLU_067096_2_3_11"/>
<dbReference type="UniPathway" id="UPA00574">
    <property type="reaction ID" value="UER00636"/>
</dbReference>
<dbReference type="Proteomes" id="UP000000603">
    <property type="component" value="Chromosome"/>
</dbReference>
<dbReference type="GO" id="GO:0005525">
    <property type="term" value="F:GTP binding"/>
    <property type="evidence" value="ECO:0007669"/>
    <property type="project" value="UniProtKB-KW"/>
</dbReference>
<dbReference type="GO" id="GO:0000287">
    <property type="term" value="F:magnesium ion binding"/>
    <property type="evidence" value="ECO:0007669"/>
    <property type="project" value="UniProtKB-UniRule"/>
</dbReference>
<dbReference type="GO" id="GO:0004845">
    <property type="term" value="F:uracil phosphoribosyltransferase activity"/>
    <property type="evidence" value="ECO:0007669"/>
    <property type="project" value="UniProtKB-UniRule"/>
</dbReference>
<dbReference type="GO" id="GO:0044206">
    <property type="term" value="P:UMP salvage"/>
    <property type="evidence" value="ECO:0007669"/>
    <property type="project" value="UniProtKB-UniRule"/>
</dbReference>
<dbReference type="GO" id="GO:0006223">
    <property type="term" value="P:uracil salvage"/>
    <property type="evidence" value="ECO:0007669"/>
    <property type="project" value="InterPro"/>
</dbReference>
<dbReference type="CDD" id="cd06223">
    <property type="entry name" value="PRTases_typeI"/>
    <property type="match status" value="1"/>
</dbReference>
<dbReference type="FunFam" id="3.40.50.2020:FF:000003">
    <property type="entry name" value="Uracil phosphoribosyltransferase"/>
    <property type="match status" value="1"/>
</dbReference>
<dbReference type="Gene3D" id="3.40.50.2020">
    <property type="match status" value="1"/>
</dbReference>
<dbReference type="HAMAP" id="MF_01218_B">
    <property type="entry name" value="Upp_B"/>
    <property type="match status" value="1"/>
</dbReference>
<dbReference type="InterPro" id="IPR000836">
    <property type="entry name" value="PRibTrfase_dom"/>
</dbReference>
<dbReference type="InterPro" id="IPR029057">
    <property type="entry name" value="PRTase-like"/>
</dbReference>
<dbReference type="InterPro" id="IPR034332">
    <property type="entry name" value="Upp_B"/>
</dbReference>
<dbReference type="InterPro" id="IPR050054">
    <property type="entry name" value="UPRTase/APRTase"/>
</dbReference>
<dbReference type="InterPro" id="IPR005765">
    <property type="entry name" value="Ura_phspho_trans"/>
</dbReference>
<dbReference type="NCBIfam" id="NF001097">
    <property type="entry name" value="PRK00129.1"/>
    <property type="match status" value="1"/>
</dbReference>
<dbReference type="NCBIfam" id="TIGR01091">
    <property type="entry name" value="upp"/>
    <property type="match status" value="1"/>
</dbReference>
<dbReference type="PANTHER" id="PTHR32315">
    <property type="entry name" value="ADENINE PHOSPHORIBOSYLTRANSFERASE"/>
    <property type="match status" value="1"/>
</dbReference>
<dbReference type="PANTHER" id="PTHR32315:SF4">
    <property type="entry name" value="URACIL PHOSPHORIBOSYLTRANSFERASE, CHLOROPLASTIC"/>
    <property type="match status" value="1"/>
</dbReference>
<dbReference type="Pfam" id="PF14681">
    <property type="entry name" value="UPRTase"/>
    <property type="match status" value="1"/>
</dbReference>
<dbReference type="SUPFAM" id="SSF53271">
    <property type="entry name" value="PRTase-like"/>
    <property type="match status" value="1"/>
</dbReference>
<keyword id="KW-0021">Allosteric enzyme</keyword>
<keyword id="KW-0328">Glycosyltransferase</keyword>
<keyword id="KW-0342">GTP-binding</keyword>
<keyword id="KW-0460">Magnesium</keyword>
<keyword id="KW-0547">Nucleotide-binding</keyword>
<keyword id="KW-0808">Transferase</keyword>
<proteinExistence type="inferred from homology"/>
<gene>
    <name evidence="1" type="primary">upp</name>
    <name type="ordered locus">PPA2184</name>
</gene>
<protein>
    <recommendedName>
        <fullName evidence="1">Uracil phosphoribosyltransferase</fullName>
        <ecNumber evidence="1">2.4.2.9</ecNumber>
    </recommendedName>
    <alternativeName>
        <fullName evidence="1">UMP pyrophosphorylase</fullName>
    </alternativeName>
    <alternativeName>
        <fullName evidence="1">UPRTase</fullName>
    </alternativeName>
</protein>